<organism>
    <name type="scientific">Bordetella petrii (strain ATCC BAA-461 / DSM 12804 / CCUG 43448)</name>
    <dbReference type="NCBI Taxonomy" id="340100"/>
    <lineage>
        <taxon>Bacteria</taxon>
        <taxon>Pseudomonadati</taxon>
        <taxon>Pseudomonadota</taxon>
        <taxon>Betaproteobacteria</taxon>
        <taxon>Burkholderiales</taxon>
        <taxon>Alcaligenaceae</taxon>
        <taxon>Bordetella</taxon>
    </lineage>
</organism>
<gene>
    <name evidence="1" type="primary">ubiD</name>
    <name type="ordered locus">Bpet3633</name>
</gene>
<comment type="function">
    <text evidence="1">Catalyzes the decarboxylation of 3-octaprenyl-4-hydroxy benzoate to 2-octaprenylphenol, an intermediate step in ubiquinone biosynthesis.</text>
</comment>
<comment type="catalytic activity">
    <reaction evidence="1">
        <text>a 4-hydroxy-3-(all-trans-polyprenyl)benzoate + H(+) = a 2-(all-trans-polyprenyl)phenol + CO2</text>
        <dbReference type="Rhea" id="RHEA:41680"/>
        <dbReference type="Rhea" id="RHEA-COMP:9514"/>
        <dbReference type="Rhea" id="RHEA-COMP:9516"/>
        <dbReference type="ChEBI" id="CHEBI:1269"/>
        <dbReference type="ChEBI" id="CHEBI:15378"/>
        <dbReference type="ChEBI" id="CHEBI:16526"/>
        <dbReference type="ChEBI" id="CHEBI:78396"/>
        <dbReference type="EC" id="4.1.1.98"/>
    </reaction>
</comment>
<comment type="cofactor">
    <cofactor evidence="1">
        <name>prenylated FMN</name>
        <dbReference type="ChEBI" id="CHEBI:87746"/>
    </cofactor>
    <text evidence="1">Binds 1 prenylated FMN per subunit.</text>
</comment>
<comment type="cofactor">
    <cofactor evidence="1">
        <name>Mn(2+)</name>
        <dbReference type="ChEBI" id="CHEBI:29035"/>
    </cofactor>
</comment>
<comment type="pathway">
    <text evidence="1">Cofactor biosynthesis; ubiquinone biosynthesis.</text>
</comment>
<comment type="subunit">
    <text evidence="1">Homohexamer.</text>
</comment>
<comment type="subcellular location">
    <subcellularLocation>
        <location evidence="1">Cell membrane</location>
        <topology evidence="1">Peripheral membrane protein</topology>
    </subcellularLocation>
</comment>
<comment type="similarity">
    <text evidence="1">Belongs to the UbiD family.</text>
</comment>
<name>UBID_BORPD</name>
<dbReference type="EC" id="4.1.1.98" evidence="1"/>
<dbReference type="EMBL" id="AM902716">
    <property type="protein sequence ID" value="CAP43976.1"/>
    <property type="molecule type" value="Genomic_DNA"/>
</dbReference>
<dbReference type="SMR" id="A9HZS2"/>
<dbReference type="STRING" id="94624.Bpet3633"/>
<dbReference type="KEGG" id="bpt:Bpet3633"/>
<dbReference type="eggNOG" id="COG0043">
    <property type="taxonomic scope" value="Bacteria"/>
</dbReference>
<dbReference type="UniPathway" id="UPA00232"/>
<dbReference type="Proteomes" id="UP000001225">
    <property type="component" value="Chromosome"/>
</dbReference>
<dbReference type="GO" id="GO:0005829">
    <property type="term" value="C:cytosol"/>
    <property type="evidence" value="ECO:0007669"/>
    <property type="project" value="TreeGrafter"/>
</dbReference>
<dbReference type="GO" id="GO:0005886">
    <property type="term" value="C:plasma membrane"/>
    <property type="evidence" value="ECO:0007669"/>
    <property type="project" value="UniProtKB-SubCell"/>
</dbReference>
<dbReference type="GO" id="GO:0008694">
    <property type="term" value="F:3-octaprenyl-4-hydroxybenzoate carboxy-lyase activity"/>
    <property type="evidence" value="ECO:0007669"/>
    <property type="project" value="UniProtKB-UniRule"/>
</dbReference>
<dbReference type="GO" id="GO:0046872">
    <property type="term" value="F:metal ion binding"/>
    <property type="evidence" value="ECO:0007669"/>
    <property type="project" value="UniProtKB-KW"/>
</dbReference>
<dbReference type="GO" id="GO:0006744">
    <property type="term" value="P:ubiquinone biosynthetic process"/>
    <property type="evidence" value="ECO:0007669"/>
    <property type="project" value="UniProtKB-UniRule"/>
</dbReference>
<dbReference type="FunFam" id="1.20.5.570:FF:000001">
    <property type="entry name" value="3-octaprenyl-4-hydroxybenzoate carboxy-lyase"/>
    <property type="match status" value="1"/>
</dbReference>
<dbReference type="FunFam" id="3.40.1670.10:FF:000001">
    <property type="entry name" value="3-octaprenyl-4-hydroxybenzoate carboxy-lyase"/>
    <property type="match status" value="1"/>
</dbReference>
<dbReference type="Gene3D" id="1.20.5.570">
    <property type="entry name" value="Single helix bin"/>
    <property type="match status" value="1"/>
</dbReference>
<dbReference type="Gene3D" id="3.40.1670.10">
    <property type="entry name" value="UbiD C-terminal domain-like"/>
    <property type="match status" value="1"/>
</dbReference>
<dbReference type="HAMAP" id="MF_01636">
    <property type="entry name" value="UbiD"/>
    <property type="match status" value="1"/>
</dbReference>
<dbReference type="InterPro" id="IPR002830">
    <property type="entry name" value="UbiD"/>
</dbReference>
<dbReference type="InterPro" id="IPR049381">
    <property type="entry name" value="UbiD-like_C"/>
</dbReference>
<dbReference type="InterPro" id="IPR049383">
    <property type="entry name" value="UbiD-like_N"/>
</dbReference>
<dbReference type="InterPro" id="IPR023677">
    <property type="entry name" value="UbiD_bacteria"/>
</dbReference>
<dbReference type="InterPro" id="IPR048304">
    <property type="entry name" value="UbiD_Rift_dom"/>
</dbReference>
<dbReference type="NCBIfam" id="NF008175">
    <property type="entry name" value="PRK10922.1"/>
    <property type="match status" value="1"/>
</dbReference>
<dbReference type="NCBIfam" id="TIGR00148">
    <property type="entry name" value="UbiD family decarboxylase"/>
    <property type="match status" value="2"/>
</dbReference>
<dbReference type="PANTHER" id="PTHR30108">
    <property type="entry name" value="3-OCTAPRENYL-4-HYDROXYBENZOATE CARBOXY-LYASE-RELATED"/>
    <property type="match status" value="1"/>
</dbReference>
<dbReference type="PANTHER" id="PTHR30108:SF17">
    <property type="entry name" value="FERULIC ACID DECARBOXYLASE 1"/>
    <property type="match status" value="1"/>
</dbReference>
<dbReference type="Pfam" id="PF01977">
    <property type="entry name" value="UbiD"/>
    <property type="match status" value="1"/>
</dbReference>
<dbReference type="Pfam" id="PF20696">
    <property type="entry name" value="UbiD_C"/>
    <property type="match status" value="1"/>
</dbReference>
<dbReference type="Pfam" id="PF20695">
    <property type="entry name" value="UbiD_N"/>
    <property type="match status" value="1"/>
</dbReference>
<dbReference type="SUPFAM" id="SSF50475">
    <property type="entry name" value="FMN-binding split barrel"/>
    <property type="match status" value="1"/>
</dbReference>
<dbReference type="SUPFAM" id="SSF143968">
    <property type="entry name" value="UbiD C-terminal domain-like"/>
    <property type="match status" value="1"/>
</dbReference>
<proteinExistence type="inferred from homology"/>
<feature type="chain" id="PRO_1000186707" description="3-octaprenyl-4-hydroxybenzoate carboxy-lyase">
    <location>
        <begin position="1"/>
        <end position="514"/>
    </location>
</feature>
<feature type="active site" description="Proton donor" evidence="1">
    <location>
        <position position="314"/>
    </location>
</feature>
<feature type="binding site" evidence="1">
    <location>
        <position position="177"/>
    </location>
    <ligand>
        <name>Mn(2+)</name>
        <dbReference type="ChEBI" id="CHEBI:29035"/>
    </ligand>
</feature>
<feature type="binding site" evidence="1">
    <location>
        <begin position="180"/>
        <end position="182"/>
    </location>
    <ligand>
        <name>prenylated FMN</name>
        <dbReference type="ChEBI" id="CHEBI:87746"/>
    </ligand>
</feature>
<feature type="binding site" evidence="1">
    <location>
        <begin position="194"/>
        <end position="196"/>
    </location>
    <ligand>
        <name>prenylated FMN</name>
        <dbReference type="ChEBI" id="CHEBI:87746"/>
    </ligand>
</feature>
<feature type="binding site" evidence="1">
    <location>
        <begin position="199"/>
        <end position="200"/>
    </location>
    <ligand>
        <name>prenylated FMN</name>
        <dbReference type="ChEBI" id="CHEBI:87746"/>
    </ligand>
</feature>
<feature type="binding site" evidence="1">
    <location>
        <position position="243"/>
    </location>
    <ligand>
        <name>Mn(2+)</name>
        <dbReference type="ChEBI" id="CHEBI:29035"/>
    </ligand>
</feature>
<accession>A9HZS2</accession>
<evidence type="ECO:0000255" key="1">
    <source>
        <dbReference type="HAMAP-Rule" id="MF_01636"/>
    </source>
</evidence>
<reference key="1">
    <citation type="journal article" date="2008" name="BMC Genomics">
        <title>The missing link: Bordetella petrii is endowed with both the metabolic versatility of environmental bacteria and virulence traits of pathogenic Bordetellae.</title>
        <authorList>
            <person name="Gross R."/>
            <person name="Guzman C.A."/>
            <person name="Sebaihia M."/>
            <person name="Martin dos Santos V.A.P."/>
            <person name="Pieper D.H."/>
            <person name="Koebnik R."/>
            <person name="Lechner M."/>
            <person name="Bartels D."/>
            <person name="Buhrmester J."/>
            <person name="Choudhuri J.V."/>
            <person name="Ebensen T."/>
            <person name="Gaigalat L."/>
            <person name="Herrmann S."/>
            <person name="Khachane A.N."/>
            <person name="Larisch C."/>
            <person name="Link S."/>
            <person name="Linke B."/>
            <person name="Meyer F."/>
            <person name="Mormann S."/>
            <person name="Nakunst D."/>
            <person name="Rueckert C."/>
            <person name="Schneiker-Bekel S."/>
            <person name="Schulze K."/>
            <person name="Voerholter F.-J."/>
            <person name="Yevsa T."/>
            <person name="Engle J.T."/>
            <person name="Goldman W.E."/>
            <person name="Puehler A."/>
            <person name="Goebel U.B."/>
            <person name="Goesmann A."/>
            <person name="Bloecker H."/>
            <person name="Kaiser O."/>
            <person name="Martinez-Arias R."/>
        </authorList>
    </citation>
    <scope>NUCLEOTIDE SEQUENCE [LARGE SCALE GENOMIC DNA]</scope>
    <source>
        <strain>ATCC BAA-461 / DSM 12804 / CCUG 43448</strain>
    </source>
</reference>
<protein>
    <recommendedName>
        <fullName evidence="1">3-octaprenyl-4-hydroxybenzoate carboxy-lyase</fullName>
        <ecNumber evidence="1">4.1.1.98</ecNumber>
    </recommendedName>
    <alternativeName>
        <fullName evidence="1">Polyprenyl p-hydroxybenzoate decarboxylase</fullName>
    </alternativeName>
</protein>
<sequence length="514" mass="57017">MKYRDLRDFLQQLELRGELKRIATPVSTHLEMTEIADRVLRAQGPALLFEHAVHNGARAAMPVLANLFGTPRRVAWGMGADEVSALRDTGELLASLREPEAPRGLRDALGKVAMLKSALWDMAPKRVRGPACQEIVWEGADVDLARLPIQTCWPGDVAPLLTWGLVITRGPNARRQNLGIYRQQPIAPNKLIMRWLSHRGGALDFREHARAHPGTPFPVAVALGADPATILGAVTPVPDSLSEYQFAGLLRGSRTEVGQALGSDLSVPAWAEIVLEGHLLPANDPRAVAPVVPEGAPPPPDTGYEMALEGPYGDHTGYYNEQDWFPVFTVDRITMRRDPVYHSTYTGKPPDEPAVLGVALNEVFVPLLRRQLPEIVDFYLPPEGCSYRLAVVSIRKQYAGHAKRVMFGLWSVLRQFMYTKFIVVVDDDIDPRNWNEVVWAITTRMDPVRDTVLVERTPIDYLDFASPVSGLGGKMGMDATNKWPGETDREWGRPIAMDDAVKQRVDAMWGELGL</sequence>
<keyword id="KW-1003">Cell membrane</keyword>
<keyword id="KW-0210">Decarboxylase</keyword>
<keyword id="KW-0285">Flavoprotein</keyword>
<keyword id="KW-0288">FMN</keyword>
<keyword id="KW-0456">Lyase</keyword>
<keyword id="KW-0464">Manganese</keyword>
<keyword id="KW-0472">Membrane</keyword>
<keyword id="KW-0479">Metal-binding</keyword>
<keyword id="KW-0831">Ubiquinone biosynthesis</keyword>